<protein>
    <recommendedName>
        <fullName evidence="1">Small ribosomal subunit protein uS17</fullName>
    </recommendedName>
    <alternativeName>
        <fullName evidence="2">30S ribosomal protein S17</fullName>
    </alternativeName>
</protein>
<organism>
    <name type="scientific">Desulforudis audaxviator (strain MP104C)</name>
    <dbReference type="NCBI Taxonomy" id="477974"/>
    <lineage>
        <taxon>Bacteria</taxon>
        <taxon>Bacillati</taxon>
        <taxon>Bacillota</taxon>
        <taxon>Clostridia</taxon>
        <taxon>Thermoanaerobacterales</taxon>
        <taxon>Candidatus Desulforudaceae</taxon>
        <taxon>Candidatus Desulforudis</taxon>
    </lineage>
</organism>
<sequence>MERKSRKVRTGRVVSDKMDKTVVVAVDTLVKHPLYGRTVRRTRKFMAHDEDNQCRIGDKVKIAETRPLSRHKRWRVAEVLERSQI</sequence>
<reference key="1">
    <citation type="submission" date="2007-10" db="EMBL/GenBank/DDBJ databases">
        <title>Complete sequence of chromosome of Desulforudis audaxviator MP104C.</title>
        <authorList>
            <person name="Copeland A."/>
            <person name="Lucas S."/>
            <person name="Lapidus A."/>
            <person name="Barry K."/>
            <person name="Glavina del Rio T."/>
            <person name="Dalin E."/>
            <person name="Tice H."/>
            <person name="Bruce D."/>
            <person name="Pitluck S."/>
            <person name="Lowry S.R."/>
            <person name="Larimer F."/>
            <person name="Land M.L."/>
            <person name="Hauser L."/>
            <person name="Kyrpides N."/>
            <person name="Ivanova N.N."/>
            <person name="Richardson P."/>
        </authorList>
    </citation>
    <scope>NUCLEOTIDE SEQUENCE [LARGE SCALE GENOMIC DNA]</scope>
    <source>
        <strain>MP104C</strain>
    </source>
</reference>
<keyword id="KW-1185">Reference proteome</keyword>
<keyword id="KW-0687">Ribonucleoprotein</keyword>
<keyword id="KW-0689">Ribosomal protein</keyword>
<keyword id="KW-0694">RNA-binding</keyword>
<keyword id="KW-0699">rRNA-binding</keyword>
<accession>B1I1J7</accession>
<proteinExistence type="inferred from homology"/>
<comment type="function">
    <text evidence="1">One of the primary rRNA binding proteins, it binds specifically to the 5'-end of 16S ribosomal RNA.</text>
</comment>
<comment type="subunit">
    <text evidence="1">Part of the 30S ribosomal subunit.</text>
</comment>
<comment type="similarity">
    <text evidence="1">Belongs to the universal ribosomal protein uS17 family.</text>
</comment>
<gene>
    <name evidence="1" type="primary">rpsQ</name>
    <name type="ordered locus">Daud_0234</name>
</gene>
<name>RS17_DESAP</name>
<evidence type="ECO:0000255" key="1">
    <source>
        <dbReference type="HAMAP-Rule" id="MF_01345"/>
    </source>
</evidence>
<evidence type="ECO:0000305" key="2"/>
<dbReference type="EMBL" id="CP000860">
    <property type="protein sequence ID" value="ACA58795.1"/>
    <property type="molecule type" value="Genomic_DNA"/>
</dbReference>
<dbReference type="RefSeq" id="WP_012301387.1">
    <property type="nucleotide sequence ID" value="NC_010424.1"/>
</dbReference>
<dbReference type="SMR" id="B1I1J7"/>
<dbReference type="STRING" id="477974.Daud_0234"/>
<dbReference type="KEGG" id="dau:Daud_0234"/>
<dbReference type="eggNOG" id="COG0186">
    <property type="taxonomic scope" value="Bacteria"/>
</dbReference>
<dbReference type="HOGENOM" id="CLU_073626_1_0_9"/>
<dbReference type="OrthoDB" id="9811714at2"/>
<dbReference type="Proteomes" id="UP000008544">
    <property type="component" value="Chromosome"/>
</dbReference>
<dbReference type="GO" id="GO:0022627">
    <property type="term" value="C:cytosolic small ribosomal subunit"/>
    <property type="evidence" value="ECO:0007669"/>
    <property type="project" value="TreeGrafter"/>
</dbReference>
<dbReference type="GO" id="GO:0019843">
    <property type="term" value="F:rRNA binding"/>
    <property type="evidence" value="ECO:0007669"/>
    <property type="project" value="UniProtKB-UniRule"/>
</dbReference>
<dbReference type="GO" id="GO:0003735">
    <property type="term" value="F:structural constituent of ribosome"/>
    <property type="evidence" value="ECO:0007669"/>
    <property type="project" value="InterPro"/>
</dbReference>
<dbReference type="GO" id="GO:0006412">
    <property type="term" value="P:translation"/>
    <property type="evidence" value="ECO:0007669"/>
    <property type="project" value="UniProtKB-UniRule"/>
</dbReference>
<dbReference type="CDD" id="cd00364">
    <property type="entry name" value="Ribosomal_uS17"/>
    <property type="match status" value="1"/>
</dbReference>
<dbReference type="FunFam" id="2.40.50.140:FF:000123">
    <property type="entry name" value="30S ribosomal protein S17"/>
    <property type="match status" value="1"/>
</dbReference>
<dbReference type="Gene3D" id="2.40.50.140">
    <property type="entry name" value="Nucleic acid-binding proteins"/>
    <property type="match status" value="1"/>
</dbReference>
<dbReference type="HAMAP" id="MF_01345_B">
    <property type="entry name" value="Ribosomal_uS17_B"/>
    <property type="match status" value="1"/>
</dbReference>
<dbReference type="InterPro" id="IPR012340">
    <property type="entry name" value="NA-bd_OB-fold"/>
</dbReference>
<dbReference type="InterPro" id="IPR000266">
    <property type="entry name" value="Ribosomal_uS17"/>
</dbReference>
<dbReference type="InterPro" id="IPR019984">
    <property type="entry name" value="Ribosomal_uS17_bact/chlr"/>
</dbReference>
<dbReference type="InterPro" id="IPR019979">
    <property type="entry name" value="Ribosomal_uS17_CS"/>
</dbReference>
<dbReference type="NCBIfam" id="NF004123">
    <property type="entry name" value="PRK05610.1"/>
    <property type="match status" value="1"/>
</dbReference>
<dbReference type="NCBIfam" id="TIGR03635">
    <property type="entry name" value="uS17_bact"/>
    <property type="match status" value="1"/>
</dbReference>
<dbReference type="PANTHER" id="PTHR10744">
    <property type="entry name" value="40S RIBOSOMAL PROTEIN S11 FAMILY MEMBER"/>
    <property type="match status" value="1"/>
</dbReference>
<dbReference type="PANTHER" id="PTHR10744:SF1">
    <property type="entry name" value="SMALL RIBOSOMAL SUBUNIT PROTEIN US17M"/>
    <property type="match status" value="1"/>
</dbReference>
<dbReference type="Pfam" id="PF00366">
    <property type="entry name" value="Ribosomal_S17"/>
    <property type="match status" value="1"/>
</dbReference>
<dbReference type="PRINTS" id="PR00973">
    <property type="entry name" value="RIBOSOMALS17"/>
</dbReference>
<dbReference type="SUPFAM" id="SSF50249">
    <property type="entry name" value="Nucleic acid-binding proteins"/>
    <property type="match status" value="1"/>
</dbReference>
<dbReference type="PROSITE" id="PS00056">
    <property type="entry name" value="RIBOSOMAL_S17"/>
    <property type="match status" value="1"/>
</dbReference>
<feature type="chain" id="PRO_1000166475" description="Small ribosomal subunit protein uS17">
    <location>
        <begin position="1"/>
        <end position="85"/>
    </location>
</feature>